<dbReference type="EMBL" id="AE001437">
    <property type="protein sequence ID" value="AAK79772.1"/>
    <property type="molecule type" value="Genomic_DNA"/>
</dbReference>
<dbReference type="PIR" id="A97123">
    <property type="entry name" value="A97123"/>
</dbReference>
<dbReference type="RefSeq" id="NP_348432.1">
    <property type="nucleotide sequence ID" value="NC_003030.1"/>
</dbReference>
<dbReference type="RefSeq" id="WP_010965113.1">
    <property type="nucleotide sequence ID" value="NC_003030.1"/>
</dbReference>
<dbReference type="SMR" id="Q97I46"/>
<dbReference type="STRING" id="272562.CA_C1807"/>
<dbReference type="GeneID" id="44998301"/>
<dbReference type="KEGG" id="cac:CA_C1807"/>
<dbReference type="PATRIC" id="fig|272562.8.peg.2013"/>
<dbReference type="eggNOG" id="COG0184">
    <property type="taxonomic scope" value="Bacteria"/>
</dbReference>
<dbReference type="HOGENOM" id="CLU_148518_0_0_9"/>
<dbReference type="OrthoDB" id="9799262at2"/>
<dbReference type="Proteomes" id="UP000000814">
    <property type="component" value="Chromosome"/>
</dbReference>
<dbReference type="GO" id="GO:0022627">
    <property type="term" value="C:cytosolic small ribosomal subunit"/>
    <property type="evidence" value="ECO:0007669"/>
    <property type="project" value="TreeGrafter"/>
</dbReference>
<dbReference type="GO" id="GO:0019843">
    <property type="term" value="F:rRNA binding"/>
    <property type="evidence" value="ECO:0007669"/>
    <property type="project" value="UniProtKB-UniRule"/>
</dbReference>
<dbReference type="GO" id="GO:0003735">
    <property type="term" value="F:structural constituent of ribosome"/>
    <property type="evidence" value="ECO:0007669"/>
    <property type="project" value="InterPro"/>
</dbReference>
<dbReference type="GO" id="GO:0006412">
    <property type="term" value="P:translation"/>
    <property type="evidence" value="ECO:0007669"/>
    <property type="project" value="UniProtKB-UniRule"/>
</dbReference>
<dbReference type="CDD" id="cd00353">
    <property type="entry name" value="Ribosomal_S15p_S13e"/>
    <property type="match status" value="1"/>
</dbReference>
<dbReference type="FunFam" id="1.10.287.10:FF:000002">
    <property type="entry name" value="30S ribosomal protein S15"/>
    <property type="match status" value="1"/>
</dbReference>
<dbReference type="Gene3D" id="6.10.250.3130">
    <property type="match status" value="1"/>
</dbReference>
<dbReference type="Gene3D" id="1.10.287.10">
    <property type="entry name" value="S15/NS1, RNA-binding"/>
    <property type="match status" value="1"/>
</dbReference>
<dbReference type="HAMAP" id="MF_01343_B">
    <property type="entry name" value="Ribosomal_uS15_B"/>
    <property type="match status" value="1"/>
</dbReference>
<dbReference type="InterPro" id="IPR000589">
    <property type="entry name" value="Ribosomal_uS15"/>
</dbReference>
<dbReference type="InterPro" id="IPR005290">
    <property type="entry name" value="Ribosomal_uS15_bac-type"/>
</dbReference>
<dbReference type="InterPro" id="IPR009068">
    <property type="entry name" value="uS15_NS1_RNA-bd_sf"/>
</dbReference>
<dbReference type="NCBIfam" id="TIGR00952">
    <property type="entry name" value="S15_bact"/>
    <property type="match status" value="1"/>
</dbReference>
<dbReference type="PANTHER" id="PTHR23321">
    <property type="entry name" value="RIBOSOMAL PROTEIN S15, BACTERIAL AND ORGANELLAR"/>
    <property type="match status" value="1"/>
</dbReference>
<dbReference type="PANTHER" id="PTHR23321:SF26">
    <property type="entry name" value="SMALL RIBOSOMAL SUBUNIT PROTEIN US15M"/>
    <property type="match status" value="1"/>
</dbReference>
<dbReference type="Pfam" id="PF00312">
    <property type="entry name" value="Ribosomal_S15"/>
    <property type="match status" value="1"/>
</dbReference>
<dbReference type="SMART" id="SM01387">
    <property type="entry name" value="Ribosomal_S15"/>
    <property type="match status" value="1"/>
</dbReference>
<dbReference type="SUPFAM" id="SSF47060">
    <property type="entry name" value="S15/NS1 RNA-binding domain"/>
    <property type="match status" value="1"/>
</dbReference>
<dbReference type="PROSITE" id="PS00362">
    <property type="entry name" value="RIBOSOMAL_S15"/>
    <property type="match status" value="1"/>
</dbReference>
<proteinExistence type="inferred from homology"/>
<evidence type="ECO:0000255" key="1">
    <source>
        <dbReference type="HAMAP-Rule" id="MF_01343"/>
    </source>
</evidence>
<evidence type="ECO:0000305" key="2"/>
<name>RS15_CLOAB</name>
<reference key="1">
    <citation type="journal article" date="2001" name="J. Bacteriol.">
        <title>Genome sequence and comparative analysis of the solvent-producing bacterium Clostridium acetobutylicum.</title>
        <authorList>
            <person name="Noelling J."/>
            <person name="Breton G."/>
            <person name="Omelchenko M.V."/>
            <person name="Makarova K.S."/>
            <person name="Zeng Q."/>
            <person name="Gibson R."/>
            <person name="Lee H.M."/>
            <person name="Dubois J."/>
            <person name="Qiu D."/>
            <person name="Hitti J."/>
            <person name="Wolf Y.I."/>
            <person name="Tatusov R.L."/>
            <person name="Sabathe F."/>
            <person name="Doucette-Stamm L.A."/>
            <person name="Soucaille P."/>
            <person name="Daly M.J."/>
            <person name="Bennett G.N."/>
            <person name="Koonin E.V."/>
            <person name="Smith D.R."/>
        </authorList>
    </citation>
    <scope>NUCLEOTIDE SEQUENCE [LARGE SCALE GENOMIC DNA]</scope>
    <source>
        <strain>ATCC 824 / DSM 792 / JCM 1419 / IAM 19013 / LMG 5710 / NBRC 13948 / NRRL B-527 / VKM B-1787 / 2291 / W</strain>
    </source>
</reference>
<keyword id="KW-1185">Reference proteome</keyword>
<keyword id="KW-0687">Ribonucleoprotein</keyword>
<keyword id="KW-0689">Ribosomal protein</keyword>
<keyword id="KW-0694">RNA-binding</keyword>
<keyword id="KW-0699">rRNA-binding</keyword>
<sequence length="87" mass="10257">MDKAKKQELIATYSRKEGDTGSPEVQIALLSERINHLTSHLKEHKKDHHSRRGLFMMIGKRRSLLNYLESVDIERYRDIIKKLGLRK</sequence>
<gene>
    <name evidence="1" type="primary">rpsO</name>
    <name type="ordered locus">CA_C1807</name>
</gene>
<organism>
    <name type="scientific">Clostridium acetobutylicum (strain ATCC 824 / DSM 792 / JCM 1419 / IAM 19013 / LMG 5710 / NBRC 13948 / NRRL B-527 / VKM B-1787 / 2291 / W)</name>
    <dbReference type="NCBI Taxonomy" id="272562"/>
    <lineage>
        <taxon>Bacteria</taxon>
        <taxon>Bacillati</taxon>
        <taxon>Bacillota</taxon>
        <taxon>Clostridia</taxon>
        <taxon>Eubacteriales</taxon>
        <taxon>Clostridiaceae</taxon>
        <taxon>Clostridium</taxon>
    </lineage>
</organism>
<comment type="function">
    <text evidence="1">One of the primary rRNA binding proteins, it binds directly to 16S rRNA where it helps nucleate assembly of the platform of the 30S subunit by binding and bridging several RNA helices of the 16S rRNA.</text>
</comment>
<comment type="function">
    <text evidence="1">Forms an intersubunit bridge (bridge B4) with the 23S rRNA of the 50S subunit in the ribosome.</text>
</comment>
<comment type="subunit">
    <text evidence="1">Part of the 30S ribosomal subunit. Forms a bridge to the 50S subunit in the 70S ribosome, contacting the 23S rRNA.</text>
</comment>
<comment type="similarity">
    <text evidence="1">Belongs to the universal ribosomal protein uS15 family.</text>
</comment>
<feature type="chain" id="PRO_0000115418" description="Small ribosomal subunit protein uS15">
    <location>
        <begin position="1"/>
        <end position="87"/>
    </location>
</feature>
<accession>Q97I46</accession>
<protein>
    <recommendedName>
        <fullName evidence="1">Small ribosomal subunit protein uS15</fullName>
    </recommendedName>
    <alternativeName>
        <fullName evidence="2">30S ribosomal protein S15</fullName>
    </alternativeName>
</protein>